<gene>
    <name type="ordered locus">SPG_0604</name>
</gene>
<evidence type="ECO:0000255" key="1">
    <source>
        <dbReference type="HAMAP-Rule" id="MF_00800"/>
    </source>
</evidence>
<reference key="1">
    <citation type="journal article" date="2001" name="Microb. Drug Resist.">
        <title>Annotated draft genomic sequence from a Streptococcus pneumoniae type 19F clinical isolate.</title>
        <authorList>
            <person name="Dopazo J."/>
            <person name="Mendoza A."/>
            <person name="Herrero J."/>
            <person name="Caldara F."/>
            <person name="Humbert Y."/>
            <person name="Friedli L."/>
            <person name="Guerrier M."/>
            <person name="Grand-Schenk E."/>
            <person name="Gandin C."/>
            <person name="de Francesco M."/>
            <person name="Polissi A."/>
            <person name="Buell G."/>
            <person name="Feger G."/>
            <person name="Garcia E."/>
            <person name="Peitsch M."/>
            <person name="Garcia-Bustos J.F."/>
        </authorList>
    </citation>
    <scope>NUCLEOTIDE SEQUENCE [LARGE SCALE GENOMIC DNA]</scope>
    <source>
        <strain>G54</strain>
    </source>
</reference>
<reference key="2">
    <citation type="submission" date="2008-03" db="EMBL/GenBank/DDBJ databases">
        <title>Pneumococcal beta glucoside metabolism investigated by whole genome comparison.</title>
        <authorList>
            <person name="Mulas L."/>
            <person name="Trappetti C."/>
            <person name="Hakenbeck R."/>
            <person name="Iannelli F."/>
            <person name="Pozzi G."/>
            <person name="Davidsen T.M."/>
            <person name="Tettelin H."/>
            <person name="Oggioni M."/>
        </authorList>
    </citation>
    <scope>NUCLEOTIDE SEQUENCE [LARGE SCALE GENOMIC DNA]</scope>
    <source>
        <strain>G54</strain>
    </source>
</reference>
<feature type="chain" id="PRO_1000198486" description="UPF0340 protein SPG_0604">
    <location>
        <begin position="1"/>
        <end position="187"/>
    </location>
</feature>
<organism>
    <name type="scientific">Streptococcus pneumoniae serotype 19F (strain G54)</name>
    <dbReference type="NCBI Taxonomy" id="512566"/>
    <lineage>
        <taxon>Bacteria</taxon>
        <taxon>Bacillati</taxon>
        <taxon>Bacillota</taxon>
        <taxon>Bacilli</taxon>
        <taxon>Lactobacillales</taxon>
        <taxon>Streptococcaceae</taxon>
        <taxon>Streptococcus</taxon>
    </lineage>
</organism>
<name>Y604_STRP4</name>
<accession>B5E2Q5</accession>
<sequence>MNETQIQRETRQVVEDVLEKTNLKQGALFVLGLSSSEVLGGQIGKESSQEIGELIVETILGILGSRGIHLAVQGCEHVNRALVVERQVAEQFDLEIVSVHPTLHAGGSGQLAAFKFMQDPVEVEFIKAHAGLDIGDTAIGMHVKHVQVPIRPILREIGHAHVTALASRPKLIGGARAHYPQDAIRKS</sequence>
<comment type="similarity">
    <text evidence="1">Belongs to the UPF0340 family.</text>
</comment>
<dbReference type="EMBL" id="CP001015">
    <property type="protein sequence ID" value="ACF56813.1"/>
    <property type="molecule type" value="Genomic_DNA"/>
</dbReference>
<dbReference type="SMR" id="B5E2Q5"/>
<dbReference type="KEGG" id="spx:SPG_0604"/>
<dbReference type="HOGENOM" id="CLU_106658_0_0_9"/>
<dbReference type="Gene3D" id="3.40.50.10360">
    <property type="entry name" value="Hypothetical protein TT1679"/>
    <property type="match status" value="1"/>
</dbReference>
<dbReference type="HAMAP" id="MF_00800">
    <property type="entry name" value="UPF0340"/>
    <property type="match status" value="1"/>
</dbReference>
<dbReference type="InterPro" id="IPR028345">
    <property type="entry name" value="Antibiotic_NAT-like"/>
</dbReference>
<dbReference type="InterPro" id="IPR006340">
    <property type="entry name" value="DUF436"/>
</dbReference>
<dbReference type="NCBIfam" id="TIGR01440">
    <property type="entry name" value="TIGR01440 family protein"/>
    <property type="match status" value="1"/>
</dbReference>
<dbReference type="Pfam" id="PF04260">
    <property type="entry name" value="DUF436"/>
    <property type="match status" value="1"/>
</dbReference>
<dbReference type="PIRSF" id="PIRSF007510">
    <property type="entry name" value="UCP007510"/>
    <property type="match status" value="1"/>
</dbReference>
<dbReference type="SUPFAM" id="SSF110710">
    <property type="entry name" value="TTHA0583/YokD-like"/>
    <property type="match status" value="1"/>
</dbReference>
<proteinExistence type="inferred from homology"/>
<protein>
    <recommendedName>
        <fullName evidence="1">UPF0340 protein SPG_0604</fullName>
    </recommendedName>
</protein>